<reference key="1">
    <citation type="journal article" date="2015" name="Elife">
        <title>Auxiliary subunits of the CKAMP family differentially modulate AMPA receptor properties.</title>
        <authorList>
            <person name="Farrow P."/>
            <person name="Khodosevich K."/>
            <person name="Sapir Y."/>
            <person name="Schulmann A."/>
            <person name="Aslam M."/>
            <person name="Stern-Bach Y."/>
            <person name="Monyer H."/>
            <person name="von Engelhardt J."/>
        </authorList>
    </citation>
    <scope>NUCLEOTIDE SEQUENCE [MRNA] (ISOFORMS 1 AND 2)</scope>
    <scope>SUBCELLULAR LOCATION</scope>
    <scope>IDENTIFICATION (ISOFORMS 1 AND 2)</scope>
    <scope>TISSUE SPECIFICITY</scope>
    <scope>INTERACTION WITH GRIA1 AND GRIA2</scope>
    <scope>DEVELOPMENTAL STAGE</scope>
    <source>
        <strain>C57BL/6N</strain>
    </source>
</reference>
<reference key="2">
    <citation type="journal article" date="2009" name="PLoS Biol.">
        <title>Lineage-specific biology revealed by a finished genome assembly of the mouse.</title>
        <authorList>
            <person name="Church D.M."/>
            <person name="Goodstadt L."/>
            <person name="Hillier L.W."/>
            <person name="Zody M.C."/>
            <person name="Goldstein S."/>
            <person name="She X."/>
            <person name="Bult C.J."/>
            <person name="Agarwala R."/>
            <person name="Cherry J.L."/>
            <person name="DiCuccio M."/>
            <person name="Hlavina W."/>
            <person name="Kapustin Y."/>
            <person name="Meric P."/>
            <person name="Maglott D."/>
            <person name="Birtle Z."/>
            <person name="Marques A.C."/>
            <person name="Graves T."/>
            <person name="Zhou S."/>
            <person name="Teague B."/>
            <person name="Potamousis K."/>
            <person name="Churas C."/>
            <person name="Place M."/>
            <person name="Herschleb J."/>
            <person name="Runnheim R."/>
            <person name="Forrest D."/>
            <person name="Amos-Landgraf J."/>
            <person name="Schwartz D.C."/>
            <person name="Cheng Z."/>
            <person name="Lindblad-Toh K."/>
            <person name="Eichler E.E."/>
            <person name="Ponting C.P."/>
        </authorList>
    </citation>
    <scope>NUCLEOTIDE SEQUENCE [LARGE SCALE GENOMIC DNA]</scope>
    <source>
        <strain>C57BL/6J</strain>
    </source>
</reference>
<reference key="3">
    <citation type="journal article" date="2005" name="Science">
        <title>The transcriptional landscape of the mammalian genome.</title>
        <authorList>
            <person name="Carninci P."/>
            <person name="Kasukawa T."/>
            <person name="Katayama S."/>
            <person name="Gough J."/>
            <person name="Frith M.C."/>
            <person name="Maeda N."/>
            <person name="Oyama R."/>
            <person name="Ravasi T."/>
            <person name="Lenhard B."/>
            <person name="Wells C."/>
            <person name="Kodzius R."/>
            <person name="Shimokawa K."/>
            <person name="Bajic V.B."/>
            <person name="Brenner S.E."/>
            <person name="Batalov S."/>
            <person name="Forrest A.R."/>
            <person name="Zavolan M."/>
            <person name="Davis M.J."/>
            <person name="Wilming L.G."/>
            <person name="Aidinis V."/>
            <person name="Allen J.E."/>
            <person name="Ambesi-Impiombato A."/>
            <person name="Apweiler R."/>
            <person name="Aturaliya R.N."/>
            <person name="Bailey T.L."/>
            <person name="Bansal M."/>
            <person name="Baxter L."/>
            <person name="Beisel K.W."/>
            <person name="Bersano T."/>
            <person name="Bono H."/>
            <person name="Chalk A.M."/>
            <person name="Chiu K.P."/>
            <person name="Choudhary V."/>
            <person name="Christoffels A."/>
            <person name="Clutterbuck D.R."/>
            <person name="Crowe M.L."/>
            <person name="Dalla E."/>
            <person name="Dalrymple B.P."/>
            <person name="de Bono B."/>
            <person name="Della Gatta G."/>
            <person name="di Bernardo D."/>
            <person name="Down T."/>
            <person name="Engstrom P."/>
            <person name="Fagiolini M."/>
            <person name="Faulkner G."/>
            <person name="Fletcher C.F."/>
            <person name="Fukushima T."/>
            <person name="Furuno M."/>
            <person name="Futaki S."/>
            <person name="Gariboldi M."/>
            <person name="Georgii-Hemming P."/>
            <person name="Gingeras T.R."/>
            <person name="Gojobori T."/>
            <person name="Green R.E."/>
            <person name="Gustincich S."/>
            <person name="Harbers M."/>
            <person name="Hayashi Y."/>
            <person name="Hensch T.K."/>
            <person name="Hirokawa N."/>
            <person name="Hill D."/>
            <person name="Huminiecki L."/>
            <person name="Iacono M."/>
            <person name="Ikeo K."/>
            <person name="Iwama A."/>
            <person name="Ishikawa T."/>
            <person name="Jakt M."/>
            <person name="Kanapin A."/>
            <person name="Katoh M."/>
            <person name="Kawasawa Y."/>
            <person name="Kelso J."/>
            <person name="Kitamura H."/>
            <person name="Kitano H."/>
            <person name="Kollias G."/>
            <person name="Krishnan S.P."/>
            <person name="Kruger A."/>
            <person name="Kummerfeld S.K."/>
            <person name="Kurochkin I.V."/>
            <person name="Lareau L.F."/>
            <person name="Lazarevic D."/>
            <person name="Lipovich L."/>
            <person name="Liu J."/>
            <person name="Liuni S."/>
            <person name="McWilliam S."/>
            <person name="Madan Babu M."/>
            <person name="Madera M."/>
            <person name="Marchionni L."/>
            <person name="Matsuda H."/>
            <person name="Matsuzawa S."/>
            <person name="Miki H."/>
            <person name="Mignone F."/>
            <person name="Miyake S."/>
            <person name="Morris K."/>
            <person name="Mottagui-Tabar S."/>
            <person name="Mulder N."/>
            <person name="Nakano N."/>
            <person name="Nakauchi H."/>
            <person name="Ng P."/>
            <person name="Nilsson R."/>
            <person name="Nishiguchi S."/>
            <person name="Nishikawa S."/>
            <person name="Nori F."/>
            <person name="Ohara O."/>
            <person name="Okazaki Y."/>
            <person name="Orlando V."/>
            <person name="Pang K.C."/>
            <person name="Pavan W.J."/>
            <person name="Pavesi G."/>
            <person name="Pesole G."/>
            <person name="Petrovsky N."/>
            <person name="Piazza S."/>
            <person name="Reed J."/>
            <person name="Reid J.F."/>
            <person name="Ring B.Z."/>
            <person name="Ringwald M."/>
            <person name="Rost B."/>
            <person name="Ruan Y."/>
            <person name="Salzberg S.L."/>
            <person name="Sandelin A."/>
            <person name="Schneider C."/>
            <person name="Schoenbach C."/>
            <person name="Sekiguchi K."/>
            <person name="Semple C.A."/>
            <person name="Seno S."/>
            <person name="Sessa L."/>
            <person name="Sheng Y."/>
            <person name="Shibata Y."/>
            <person name="Shimada H."/>
            <person name="Shimada K."/>
            <person name="Silva D."/>
            <person name="Sinclair B."/>
            <person name="Sperling S."/>
            <person name="Stupka E."/>
            <person name="Sugiura K."/>
            <person name="Sultana R."/>
            <person name="Takenaka Y."/>
            <person name="Taki K."/>
            <person name="Tammoja K."/>
            <person name="Tan S.L."/>
            <person name="Tang S."/>
            <person name="Taylor M.S."/>
            <person name="Tegner J."/>
            <person name="Teichmann S.A."/>
            <person name="Ueda H.R."/>
            <person name="van Nimwegen E."/>
            <person name="Verardo R."/>
            <person name="Wei C.L."/>
            <person name="Yagi K."/>
            <person name="Yamanishi H."/>
            <person name="Zabarovsky E."/>
            <person name="Zhu S."/>
            <person name="Zimmer A."/>
            <person name="Hide W."/>
            <person name="Bult C."/>
            <person name="Grimmond S.M."/>
            <person name="Teasdale R.D."/>
            <person name="Liu E.T."/>
            <person name="Brusic V."/>
            <person name="Quackenbush J."/>
            <person name="Wahlestedt C."/>
            <person name="Mattick J.S."/>
            <person name="Hume D.A."/>
            <person name="Kai C."/>
            <person name="Sasaki D."/>
            <person name="Tomaru Y."/>
            <person name="Fukuda S."/>
            <person name="Kanamori-Katayama M."/>
            <person name="Suzuki M."/>
            <person name="Aoki J."/>
            <person name="Arakawa T."/>
            <person name="Iida J."/>
            <person name="Imamura K."/>
            <person name="Itoh M."/>
            <person name="Kato T."/>
            <person name="Kawaji H."/>
            <person name="Kawagashira N."/>
            <person name="Kawashima T."/>
            <person name="Kojima M."/>
            <person name="Kondo S."/>
            <person name="Konno H."/>
            <person name="Nakano K."/>
            <person name="Ninomiya N."/>
            <person name="Nishio T."/>
            <person name="Okada M."/>
            <person name="Plessy C."/>
            <person name="Shibata K."/>
            <person name="Shiraki T."/>
            <person name="Suzuki S."/>
            <person name="Tagami M."/>
            <person name="Waki K."/>
            <person name="Watahiki A."/>
            <person name="Okamura-Oho Y."/>
            <person name="Suzuki H."/>
            <person name="Kawai J."/>
            <person name="Hayashizaki Y."/>
        </authorList>
    </citation>
    <scope>NUCLEOTIDE SEQUENCE [LARGE SCALE MRNA] OF 157-558 (ISOFORM 2)</scope>
    <scope>NUCLEOTIDE SEQUENCE [LARGE SCALE MRNA] OF 184-558 (ISOFORM 1)</scope>
    <source>
        <strain>C57BL/6J</strain>
        <tissue>Lung</tissue>
        <tissue>Mammary gland</tissue>
    </source>
</reference>
<reference key="4">
    <citation type="journal article" date="2006" name="Mol. Cell. Proteomics">
        <title>Comprehensive identification of phosphorylation sites in postsynaptic density preparations.</title>
        <authorList>
            <person name="Trinidad J.C."/>
            <person name="Specht C.G."/>
            <person name="Thalhammer A."/>
            <person name="Schoepfer R."/>
            <person name="Burlingame A.L."/>
        </authorList>
    </citation>
    <scope>IDENTIFICATION BY MASS SPECTROMETRY [LARGE SCALE ANALYSIS]</scope>
    <source>
        <tissue>Brain</tissue>
    </source>
</reference>
<reference key="5">
    <citation type="journal article" date="2010" name="Cell">
        <title>A tissue-specific atlas of mouse protein phosphorylation and expression.</title>
        <authorList>
            <person name="Huttlin E.L."/>
            <person name="Jedrychowski M.P."/>
            <person name="Elias J.E."/>
            <person name="Goswami T."/>
            <person name="Rad R."/>
            <person name="Beausoleil S.A."/>
            <person name="Villen J."/>
            <person name="Haas W."/>
            <person name="Sowa M.E."/>
            <person name="Gygi S.P."/>
        </authorList>
    </citation>
    <scope>PHOSPHORYLATION [LARGE SCALE ANALYSIS] AT SER-438 AND THR-532</scope>
    <scope>IDENTIFICATION BY MASS SPECTROMETRY [LARGE SCALE ANALYSIS]</scope>
    <source>
        <tissue>Brain</tissue>
    </source>
</reference>
<reference key="6">
    <citation type="journal article" date="2017" name="Elife">
        <title>The AMPA receptor-associated protein Shisa7 regulates hippocampal synaptic function and contextual memory.</title>
        <authorList>
            <person name="Schmitz L.J.M."/>
            <person name="Klaassen R.V."/>
            <person name="Ruiperez-Alonso M."/>
            <person name="Zamri A.E."/>
            <person name="Stroeder J."/>
            <person name="Rao-Ruiz P."/>
            <person name="Lodder J.C."/>
            <person name="van der Loo R.J."/>
            <person name="Mansvelder H.D."/>
            <person name="Smit A.B."/>
            <person name="Spijker S."/>
        </authorList>
    </citation>
    <scope>FUNCTION</scope>
    <scope>SUBCELLULAR LOCATION</scope>
    <scope>IDENTIFICATION BY MASS SPECTROMETRY</scope>
    <scope>DISRUPTION PHENOTYPE</scope>
    <scope>IDENTIFICATION IN AMPAR COMPLEX</scope>
    <scope>MUTAGENESIS OF 555-GLU--VAL-558</scope>
</reference>
<reference key="7">
    <citation type="journal article" date="2019" name="Science">
        <title>Shisa7 is a GABAA receptor auxiliary subunit controlling benzodiazepine actions.</title>
        <authorList>
            <person name="Han W."/>
            <person name="Li J."/>
            <person name="Pelkey K.A."/>
            <person name="Pandey S."/>
            <person name="Chen X."/>
            <person name="Wang Y.X."/>
            <person name="Wu K."/>
            <person name="Ge L."/>
            <person name="Li T."/>
            <person name="Castellano D."/>
            <person name="Liu C."/>
            <person name="Wu L.G."/>
            <person name="Petralia R.S."/>
            <person name="Lynch J.W."/>
            <person name="McBain C.J."/>
            <person name="Lu W."/>
        </authorList>
    </citation>
    <scope>FUNCTION</scope>
    <scope>SUBCELLULAR LOCATION</scope>
    <scope>INTERACTION WITH GABRA1; GABRA2 AND GABRG2</scope>
    <scope>DISRUPTION PHENOTYPE</scope>
    <scope>TISSUE SPECIFICITY</scope>
</reference>
<name>SHSA7_MOUSE</name>
<feature type="signal peptide" evidence="1">
    <location>
        <begin position="1"/>
        <end position="22"/>
    </location>
</feature>
<feature type="chain" id="PRO_0000344473" description="Protein shisa-7">
    <location>
        <begin position="23"/>
        <end position="558"/>
    </location>
</feature>
<feature type="topological domain" description="Extracellular" evidence="1">
    <location>
        <begin position="23"/>
        <end position="189"/>
    </location>
</feature>
<feature type="transmembrane region" description="Helical" evidence="1">
    <location>
        <begin position="190"/>
        <end position="210"/>
    </location>
</feature>
<feature type="topological domain" description="Cytoplasmic" evidence="1">
    <location>
        <begin position="211"/>
        <end position="558"/>
    </location>
</feature>
<feature type="region of interest" description="Disordered" evidence="2">
    <location>
        <begin position="53"/>
        <end position="79"/>
    </location>
</feature>
<feature type="region of interest" description="Disordered" evidence="2">
    <location>
        <begin position="142"/>
        <end position="181"/>
    </location>
</feature>
<feature type="region of interest" description="GRID" evidence="5">
    <location>
        <begin position="154"/>
        <end position="175"/>
    </location>
</feature>
<feature type="region of interest" description="Disordered" evidence="2">
    <location>
        <begin position="236"/>
        <end position="263"/>
    </location>
</feature>
<feature type="region of interest" description="Disordered" evidence="2">
    <location>
        <begin position="443"/>
        <end position="506"/>
    </location>
</feature>
<feature type="short sequence motif" description="PDZ-binding" evidence="4">
    <location>
        <begin position="555"/>
        <end position="558"/>
    </location>
</feature>
<feature type="compositionally biased region" description="Low complexity" evidence="2">
    <location>
        <begin position="57"/>
        <end position="77"/>
    </location>
</feature>
<feature type="compositionally biased region" description="Gly residues" evidence="2">
    <location>
        <begin position="148"/>
        <end position="181"/>
    </location>
</feature>
<feature type="compositionally biased region" description="Pro residues" evidence="2">
    <location>
        <begin position="453"/>
        <end position="462"/>
    </location>
</feature>
<feature type="compositionally biased region" description="Low complexity" evidence="2">
    <location>
        <begin position="466"/>
        <end position="477"/>
    </location>
</feature>
<feature type="modified residue" description="Phosphoserine" evidence="13">
    <location>
        <position position="438"/>
    </location>
</feature>
<feature type="modified residue" description="Phosphothreonine" evidence="13">
    <location>
        <position position="532"/>
    </location>
</feature>
<feature type="glycosylation site" description="N-linked (GlcNAc...) asparagine" evidence="1">
    <location>
        <position position="26"/>
    </location>
</feature>
<feature type="splice variant" id="VSP_034790" description="In isoform 2." evidence="3">
    <location>
        <begin position="280"/>
        <end position="296"/>
    </location>
</feature>
<feature type="mutagenesis site" description="Abolishes the colocalization with GPHN." evidence="5">
    <location>
        <begin position="154"/>
        <end position="175"/>
    </location>
</feature>
<feature type="mutagenesis site" description="Loss of interaction with PDZ-domain of DLG4." evidence="4">
    <location>
        <begin position="555"/>
        <end position="558"/>
    </location>
</feature>
<feature type="sequence conflict" description="In Ref. 3; BAC39371." evidence="9" ref="3">
    <original>V</original>
    <variation>M</variation>
    <location>
        <position position="202"/>
    </location>
</feature>
<dbReference type="EMBL" id="KU707906">
    <property type="protein sequence ID" value="AND76929.1"/>
    <property type="molecule type" value="mRNA"/>
</dbReference>
<dbReference type="EMBL" id="KU707907">
    <property type="protein sequence ID" value="AND76930.1"/>
    <property type="molecule type" value="mRNA"/>
</dbReference>
<dbReference type="EMBL" id="AC162034">
    <property type="status" value="NOT_ANNOTATED_CDS"/>
    <property type="molecule type" value="Genomic_DNA"/>
</dbReference>
<dbReference type="EMBL" id="AK085127">
    <property type="protein sequence ID" value="BAC39371.1"/>
    <property type="status" value="ALT_INIT"/>
    <property type="molecule type" value="mRNA"/>
</dbReference>
<dbReference type="EMBL" id="AK145016">
    <property type="protein sequence ID" value="BAE26185.1"/>
    <property type="molecule type" value="mRNA"/>
</dbReference>
<dbReference type="CCDS" id="CCDS71882.1">
    <molecule id="Q8C3Q5-2"/>
</dbReference>
<dbReference type="RefSeq" id="NP_001277220.1">
    <molecule id="Q8C3Q5-2"/>
    <property type="nucleotide sequence ID" value="NM_001290291.1"/>
</dbReference>
<dbReference type="RefSeq" id="NP_766325.3">
    <molecule id="Q8C3Q5-1"/>
    <property type="nucleotide sequence ID" value="NM_172737.4"/>
</dbReference>
<dbReference type="RefSeq" id="XP_006539838.1">
    <molecule id="Q8C3Q5-1"/>
    <property type="nucleotide sequence ID" value="XM_006539775.5"/>
</dbReference>
<dbReference type="RefSeq" id="XP_011248805.1">
    <property type="nucleotide sequence ID" value="XM_011250503.1"/>
</dbReference>
<dbReference type="RefSeq" id="XP_017177636.1">
    <property type="nucleotide sequence ID" value="XM_017322147.1"/>
</dbReference>
<dbReference type="RefSeq" id="XP_030098276.1">
    <molecule id="Q8C3Q5-2"/>
    <property type="nucleotide sequence ID" value="XM_030242416.2"/>
</dbReference>
<dbReference type="SMR" id="Q8C3Q5"/>
<dbReference type="BioGRID" id="231300">
    <property type="interactions" value="5"/>
</dbReference>
<dbReference type="FunCoup" id="Q8C3Q5">
    <property type="interactions" value="159"/>
</dbReference>
<dbReference type="IntAct" id="Q8C3Q5">
    <property type="interactions" value="3"/>
</dbReference>
<dbReference type="MINT" id="Q8C3Q5"/>
<dbReference type="STRING" id="10090.ENSMUSP00000112423"/>
<dbReference type="GlyConnect" id="2643">
    <property type="glycosylation" value="1 N-Linked glycan (1 site)"/>
</dbReference>
<dbReference type="GlyCosmos" id="Q8C3Q5">
    <property type="glycosylation" value="2 sites, 1 glycan"/>
</dbReference>
<dbReference type="GlyGen" id="Q8C3Q5">
    <property type="glycosylation" value="3 sites, 3 N-linked glycans (2 sites), 1 O-linked glycan (1 site)"/>
</dbReference>
<dbReference type="iPTMnet" id="Q8C3Q5"/>
<dbReference type="PhosphoSitePlus" id="Q8C3Q5"/>
<dbReference type="SwissPalm" id="Q8C3Q5"/>
<dbReference type="PaxDb" id="10090-ENSMUSP00000064886"/>
<dbReference type="PeptideAtlas" id="Q8C3Q5"/>
<dbReference type="ProteomicsDB" id="255425">
    <molecule id="Q8C3Q5-1"/>
</dbReference>
<dbReference type="ProteomicsDB" id="255426">
    <molecule id="Q8C3Q5-2"/>
</dbReference>
<dbReference type="Antibodypedia" id="52662">
    <property type="antibodies" value="64 antibodies from 17 providers"/>
</dbReference>
<dbReference type="DNASU" id="232813"/>
<dbReference type="Ensembl" id="ENSMUST00000066041.12">
    <molecule id="Q8C3Q5-1"/>
    <property type="protein sequence ID" value="ENSMUSP00000064886.6"/>
    <property type="gene ID" value="ENSMUSG00000053550.14"/>
</dbReference>
<dbReference type="Ensembl" id="ENSMUST00000119433.4">
    <molecule id="Q8C3Q5-2"/>
    <property type="protein sequence ID" value="ENSMUSP00000112423.3"/>
    <property type="gene ID" value="ENSMUSG00000053550.14"/>
</dbReference>
<dbReference type="GeneID" id="232813"/>
<dbReference type="KEGG" id="mmu:232813"/>
<dbReference type="UCSC" id="uc009eyu.2">
    <molecule id="Q8C3Q5-1"/>
    <property type="organism name" value="mouse"/>
</dbReference>
<dbReference type="UCSC" id="uc009eyv.3">
    <molecule id="Q8C3Q5-2"/>
    <property type="organism name" value="mouse"/>
</dbReference>
<dbReference type="AGR" id="MGI:3605641"/>
<dbReference type="CTD" id="729956"/>
<dbReference type="MGI" id="MGI:3605641">
    <property type="gene designation" value="Shisa7"/>
</dbReference>
<dbReference type="VEuPathDB" id="HostDB:ENSMUSG00000053550"/>
<dbReference type="eggNOG" id="ENOG502QV92">
    <property type="taxonomic scope" value="Eukaryota"/>
</dbReference>
<dbReference type="GeneTree" id="ENSGT00940000162254"/>
<dbReference type="InParanoid" id="Q8C3Q5"/>
<dbReference type="OMA" id="MLDRHHM"/>
<dbReference type="OrthoDB" id="9836398at2759"/>
<dbReference type="PhylomeDB" id="Q8C3Q5"/>
<dbReference type="TreeFam" id="TF330800"/>
<dbReference type="BioGRID-ORCS" id="232813">
    <property type="hits" value="1 hit in 72 CRISPR screens"/>
</dbReference>
<dbReference type="CD-CODE" id="CE726F99">
    <property type="entry name" value="Postsynaptic density"/>
</dbReference>
<dbReference type="PRO" id="PR:Q8C3Q5"/>
<dbReference type="Proteomes" id="UP000000589">
    <property type="component" value="Chromosome 7"/>
</dbReference>
<dbReference type="RNAct" id="Q8C3Q5">
    <property type="molecule type" value="protein"/>
</dbReference>
<dbReference type="Bgee" id="ENSMUSG00000053550">
    <property type="expression patterns" value="Expressed in superior frontal gyrus and 121 other cell types or tissues"/>
</dbReference>
<dbReference type="ExpressionAtlas" id="Q8C3Q5">
    <property type="expression patterns" value="baseline and differential"/>
</dbReference>
<dbReference type="GO" id="GO:0098985">
    <property type="term" value="C:asymmetric, glutamatergic, excitatory synapse"/>
    <property type="evidence" value="ECO:0000314"/>
    <property type="project" value="UniProtKB"/>
</dbReference>
<dbReference type="GO" id="GO:0098978">
    <property type="term" value="C:glutamatergic synapse"/>
    <property type="evidence" value="ECO:0000314"/>
    <property type="project" value="SynGO"/>
</dbReference>
<dbReference type="GO" id="GO:0014069">
    <property type="term" value="C:postsynaptic density"/>
    <property type="evidence" value="ECO:0000314"/>
    <property type="project" value="UniProtKB"/>
</dbReference>
<dbReference type="GO" id="GO:0098839">
    <property type="term" value="C:postsynaptic density membrane"/>
    <property type="evidence" value="ECO:0007669"/>
    <property type="project" value="UniProtKB-SubCell"/>
</dbReference>
<dbReference type="GO" id="GO:0099634">
    <property type="term" value="C:postsynaptic specialization membrane"/>
    <property type="evidence" value="ECO:0000314"/>
    <property type="project" value="SynGO"/>
</dbReference>
<dbReference type="GO" id="GO:0050811">
    <property type="term" value="F:GABA receptor binding"/>
    <property type="evidence" value="ECO:0000314"/>
    <property type="project" value="UniProtKB"/>
</dbReference>
<dbReference type="GO" id="GO:0035255">
    <property type="term" value="F:ionotropic glutamate receptor binding"/>
    <property type="evidence" value="ECO:0000314"/>
    <property type="project" value="UniProtKB"/>
</dbReference>
<dbReference type="GO" id="GO:0097112">
    <property type="term" value="P:gamma-aminobutyric acid receptor clustering"/>
    <property type="evidence" value="ECO:0000314"/>
    <property type="project" value="UniProtKB"/>
</dbReference>
<dbReference type="GO" id="GO:0007214">
    <property type="term" value="P:gamma-aminobutyric acid signaling pathway"/>
    <property type="evidence" value="ECO:0000314"/>
    <property type="project" value="UniProtKB"/>
</dbReference>
<dbReference type="GO" id="GO:0007613">
    <property type="term" value="P:memory"/>
    <property type="evidence" value="ECO:0000315"/>
    <property type="project" value="UniProtKB"/>
</dbReference>
<dbReference type="GO" id="GO:1900273">
    <property type="term" value="P:positive regulation of long-term synaptic potentiation"/>
    <property type="evidence" value="ECO:0000315"/>
    <property type="project" value="UniProtKB"/>
</dbReference>
<dbReference type="GO" id="GO:1904717">
    <property type="term" value="P:regulation of AMPA glutamate receptor clustering"/>
    <property type="evidence" value="ECO:0000315"/>
    <property type="project" value="UniProtKB"/>
</dbReference>
<dbReference type="GO" id="GO:0106040">
    <property type="term" value="P:regulation of GABA-A receptor activity"/>
    <property type="evidence" value="ECO:0000314"/>
    <property type="project" value="UniProtKB"/>
</dbReference>
<dbReference type="InterPro" id="IPR026910">
    <property type="entry name" value="Shisa"/>
</dbReference>
<dbReference type="InterPro" id="IPR053891">
    <property type="entry name" value="Shisa_N"/>
</dbReference>
<dbReference type="PANTHER" id="PTHR31774:SF2">
    <property type="entry name" value="PROTEIN SHISA-7"/>
    <property type="match status" value="1"/>
</dbReference>
<dbReference type="PANTHER" id="PTHR31774">
    <property type="entry name" value="PROTEIN SHISA-9-RELATED"/>
    <property type="match status" value="1"/>
</dbReference>
<dbReference type="Pfam" id="PF13908">
    <property type="entry name" value="Shisa_N"/>
    <property type="match status" value="1"/>
</dbReference>
<proteinExistence type="evidence at protein level"/>
<comment type="function">
    <text evidence="5 10 11">Transmembrane protein that regulates gamma-aminobutyric acid type A receptor (GABA(A)R) trafficking, channel deactivation kinetics and pharmacology, necessary for fast inhibitory transmission in the brain (PubMed:31601770). Enhances the action of benzodiazepine, a primary GABA(A)Rs target drug, in the brain (PubMed:31601770). May affect channel kinetics of AMPA-type glutamate receptors (AMPAR), the brain's main excitatory neurotransmitter, necessary for synaptic hippocampal plasticity, and memory recall (Probable). May regulate the induction and maintenance of long-term potentiation at Schaffer collaterals/CA3-CA1 excitatory synapses (Probable).</text>
</comment>
<comment type="subunit">
    <text evidence="3 4 5">Interacts with GABA(A)R (GABA type A receptor) subunits GABRA1, GABRA2 and GABRG2; the interaction is direct (PubMed:31601770). Does not interact with GABRB2 and GABRB3 subunits (PubMed:31601770). Interacts with AMPAR subunits GRIA1, GRIA2 and GRIA3 and AMPAR auxiliary proteins SHISA6 and SHISA7 in heterologous cells (PubMed:26623514, PubMed:29199957). Interacts (via PDZ-binding motif) with DLG4/PSD-95 (via PDZ domain)in heterologous cells; the interaction is direct (PubMed:29199957).</text>
</comment>
<comment type="subcellular location">
    <subcellularLocation>
        <location evidence="4 5">Postsynaptic density membrane</location>
        <topology evidence="11">Single-pass type I membrane protein</topology>
    </subcellularLocation>
    <text evidence="5">Localizes at GABAergic inhibitory synapses and colocalizes with gephyrin in hippocampal neurons.</text>
</comment>
<comment type="alternative products">
    <event type="alternative splicing"/>
    <isoform>
        <id>Q8C3Q5-1</id>
        <name>1</name>
        <sequence type="displayed"/>
    </isoform>
    <isoform>
        <id>Q8C3Q5-2</id>
        <name>2</name>
        <sequence type="described" ref="VSP_034790"/>
    </isoform>
</comment>
<comment type="tissue specificity">
    <text evidence="3 4 5">Mainly expressed in neurons (PubMed:26623514, PubMed:29199957, PubMed:31601770). Highly expressed in brain structures including cortex, striatum, olfactory bulb, amygdala hippocampus CA1-3 and dentate gyrus (at protein level) (PubMed:26623514, PubMed:29199957, PubMed:31601770).</text>
</comment>
<comment type="developmental stage">
    <text evidence="3 4">Expressed in the cerebral cortex on 17 dpc and in olfactory bulb and hippocampus on postnatal day 1 (P1) (PubMed:26623514). Expression in hippocampus increases during postnatal development and reaches a plateau after 3 weeks (PubMed:29199957). Expression is high during prenatal development and decreases in the thalamus and brainstem during postnatal development (PubMed:26623514).</text>
</comment>
<comment type="domain">
    <text evidence="5">The GRID (GABA(A)R-interacting domain) is critical for its subcellular localization and interaction with GABA(A)R.</text>
</comment>
<comment type="domain">
    <text evidence="4">The PDZ-binding motif interacts with PDZ-domain of scaffolding protein DLG4 in heterologous cells.</text>
</comment>
<comment type="PTM">
    <text evidence="4">N-glycosylated.</text>
</comment>
<comment type="disruption phenotype">
    <text evidence="4 5">Knockout mice show a decrease in miniature inhibitory postsynaptic currents frequency, but not amplitude, in CA1 pyramidal neurons (PubMed:31601770). Mice show impaired acquisition of contextual fear memory without affecting auditory fear learning or anxiety (PubMed:29199957). Decreased long-term potentiation of hippocampal glutamatergic synapses (PubMed:29199957).</text>
</comment>
<comment type="similarity">
    <text evidence="9">Belongs to the shisa family.</text>
</comment>
<comment type="caution">
    <text evidence="3 4 5 9">SHISA7 has been reported to interact with AMPAR subunit GRIA1 in heterologous conditions and in the brain (PubMed:26623514, PubMed:29199957). However, it was later demonstrated that SHISA7 does not colocalize neither interact with AMPAR, but with GABA(A)R (PubMed:31601770). Therefore additional experiments are needed to understand the discrepancy for SHISA7 function.</text>
</comment>
<comment type="sequence caution" evidence="9">
    <conflict type="erroneous initiation">
        <sequence resource="EMBL-CDS" id="BAC39371"/>
    </conflict>
    <text>Truncated N-terminus.</text>
</comment>
<evidence type="ECO:0000255" key="1"/>
<evidence type="ECO:0000256" key="2">
    <source>
        <dbReference type="SAM" id="MobiDB-lite"/>
    </source>
</evidence>
<evidence type="ECO:0000269" key="3">
    <source>
    </source>
</evidence>
<evidence type="ECO:0000269" key="4">
    <source>
    </source>
</evidence>
<evidence type="ECO:0000269" key="5">
    <source>
    </source>
</evidence>
<evidence type="ECO:0000303" key="6">
    <source>
    </source>
</evidence>
<evidence type="ECO:0000303" key="7">
    <source>
    </source>
</evidence>
<evidence type="ECO:0000303" key="8">
    <source>
    </source>
</evidence>
<evidence type="ECO:0000305" key="9"/>
<evidence type="ECO:0000305" key="10">
    <source>
    </source>
</evidence>
<evidence type="ECO:0000305" key="11">
    <source>
    </source>
</evidence>
<evidence type="ECO:0000312" key="12">
    <source>
        <dbReference type="MGI" id="MGI:3605641"/>
    </source>
</evidence>
<evidence type="ECO:0007744" key="13">
    <source>
    </source>
</evidence>
<protein>
    <recommendedName>
        <fullName evidence="9">Protein shisa-7</fullName>
    </recommendedName>
    <alternativeName>
        <fullName evidence="6 7">Cystine-knot AMPAR modulating protein of 59 kDa</fullName>
        <shortName evidence="6 7">CKAMP59</shortName>
    </alternativeName>
    <alternativeName>
        <fullName evidence="8">GABA(A) receptor auxiliary subunit Shisa7</fullName>
    </alternativeName>
    <alternativeName>
        <fullName evidence="9">Shisa family member 7</fullName>
    </alternativeName>
</protein>
<keyword id="KW-0025">Alternative splicing</keyword>
<keyword id="KW-1003">Cell membrane</keyword>
<keyword id="KW-0325">Glycoprotein</keyword>
<keyword id="KW-0472">Membrane</keyword>
<keyword id="KW-0597">Phosphoprotein</keyword>
<keyword id="KW-0628">Postsynaptic cell membrane</keyword>
<keyword id="KW-1185">Reference proteome</keyword>
<keyword id="KW-0732">Signal</keyword>
<keyword id="KW-0770">Synapse</keyword>
<keyword id="KW-0812">Transmembrane</keyword>
<keyword id="KW-1133">Transmembrane helix</keyword>
<accession>Q8C3Q5</accession>
<accession>A0A172Q401</accession>
<accession>A0A172Q418</accession>
<accession>Q3UMB3</accession>
<gene>
    <name evidence="7 12" type="primary">Shisa7</name>
</gene>
<organism>
    <name type="scientific">Mus musculus</name>
    <name type="common">Mouse</name>
    <dbReference type="NCBI Taxonomy" id="10090"/>
    <lineage>
        <taxon>Eukaryota</taxon>
        <taxon>Metazoa</taxon>
        <taxon>Chordata</taxon>
        <taxon>Craniata</taxon>
        <taxon>Vertebrata</taxon>
        <taxon>Euteleostomi</taxon>
        <taxon>Mammalia</taxon>
        <taxon>Eutheria</taxon>
        <taxon>Euarchontoglires</taxon>
        <taxon>Glires</taxon>
        <taxon>Rodentia</taxon>
        <taxon>Myomorpha</taxon>
        <taxon>Muroidea</taxon>
        <taxon>Muridae</taxon>
        <taxon>Murinae</taxon>
        <taxon>Mus</taxon>
        <taxon>Mus</taxon>
    </lineage>
</organism>
<sequence>MPALLLLGTVALLASAAGPAGARPSNDTSSVAPGPLPALLAHLRRLTGALAGGGSAAGTSANATKTSPASGTGAAARAPPPAELCHGYYDVMGQYDATFNCSTGSYRFCCGTCHYRFCCEHRHMRLAQASCSNYDTPRWATTPPPLAGGAGGAGGAGGGPGPGQAGWLEGGRAGGAGGRGGEGPGGSTAYVVCGVISFALAVGVGAKVAFSKASRAPRAHREINVPRALVDILRHQAGPATRPDRARSSSLTPGLGGPDSMAPRTPKNLYNTMKPSNLDNLHYNVNSPKHHAATLDWRAMPPPSPSLHYSTLSCSRSFHNLSHLPPSYEAAVKSELNRYSSLKRLAEKDLDEAYLKRRQLEMPRGTLPLHALRRPGTGGGYRMDGWGGPEELGLAPAPNPRRVMSQEHLLGDGSRASRYEFTLPRARLVSQEHLLLSSPEALRQSREHLLSPPRSPALPPDPTTRASLAASHSNLLLGPGGPPTPLHGLPPSGLHAHHHHALHGSPQPAWMSDAGGGGGTLARRPPFQRQGTLEQLQFIPGHHLPQHLRTASKNEVTV</sequence>